<keyword id="KW-0456">Lyase</keyword>
<keyword id="KW-0460">Magnesium</keyword>
<keyword id="KW-0479">Metal-binding</keyword>
<keyword id="KW-1185">Reference proteome</keyword>
<organism>
    <name type="scientific">Ricinus communis</name>
    <name type="common">Castor bean</name>
    <dbReference type="NCBI Taxonomy" id="3988"/>
    <lineage>
        <taxon>Eukaryota</taxon>
        <taxon>Viridiplantae</taxon>
        <taxon>Streptophyta</taxon>
        <taxon>Embryophyta</taxon>
        <taxon>Tracheophyta</taxon>
        <taxon>Spermatophyta</taxon>
        <taxon>Magnoliopsida</taxon>
        <taxon>eudicotyledons</taxon>
        <taxon>Gunneridae</taxon>
        <taxon>Pentapetalae</taxon>
        <taxon>rosids</taxon>
        <taxon>fabids</taxon>
        <taxon>Malpighiales</taxon>
        <taxon>Euphorbiaceae</taxon>
        <taxon>Acalyphoideae</taxon>
        <taxon>Acalypheae</taxon>
        <taxon>Ricinus</taxon>
    </lineage>
</organism>
<reference key="1">
    <citation type="journal article" date="2010" name="Nat. Biotechnol.">
        <title>Draft genome sequence of the oilseed species Ricinus communis.</title>
        <authorList>
            <person name="Chan A.P."/>
            <person name="Crabtree J."/>
            <person name="Zhao Q."/>
            <person name="Lorenzi H."/>
            <person name="Orvis J."/>
            <person name="Puiu D."/>
            <person name="Melake-Berhan A."/>
            <person name="Jones K.M."/>
            <person name="Redman J."/>
            <person name="Chen G."/>
            <person name="Cahoon E.B."/>
            <person name="Gedil M."/>
            <person name="Stanke M."/>
            <person name="Haas B.J."/>
            <person name="Wortman J.R."/>
            <person name="Fraser-Liggett C.M."/>
            <person name="Ravel J."/>
            <person name="Rabinowicz P.D."/>
        </authorList>
    </citation>
    <scope>NUCLEOTIDE SEQUENCE [LARGE SCALE GENOMIC DNA]</scope>
    <source>
        <strain>cv. Hale</strain>
    </source>
</reference>
<reference key="2">
    <citation type="journal article" date="2012" name="Phytochemistry">
        <title>Functional characterization of four sesquiterpene synthases from Ricinus communis (castor bean).</title>
        <authorList>
            <person name="Xie X."/>
            <person name="Kirby J."/>
            <person name="Keasling J.D."/>
        </authorList>
    </citation>
    <scope>GENE NAME</scope>
</reference>
<comment type="function">
    <text evidence="1">Probable sesquiterpene synthase.</text>
</comment>
<comment type="cofactor">
    <cofactor evidence="1">
        <name>Mg(2+)</name>
        <dbReference type="ChEBI" id="CHEBI:18420"/>
    </cofactor>
    <text evidence="1">Binds 3 Mg(2+) ions per subunit.</text>
</comment>
<comment type="domain">
    <text evidence="1">The Asp-Asp-Xaa-Xaa-Asp/Glu (DDXXD/E) motif is important for the catalytic activity, presumably through binding to Mg(2+).</text>
</comment>
<comment type="miscellaneous">
    <text evidence="3">Does not produce any detectable product when tested in vitro.</text>
</comment>
<comment type="similarity">
    <text evidence="2">Belongs to the terpene synthase family.</text>
</comment>
<name>TPS2_RICCO</name>
<feature type="chain" id="PRO_0000422200" description="Probable terpene synthase 2">
    <location>
        <begin position="1"/>
        <end position="550"/>
    </location>
</feature>
<feature type="short sequence motif" description="DDXXD motif">
    <location>
        <begin position="305"/>
        <end position="309"/>
    </location>
</feature>
<feature type="binding site" evidence="1">
    <location>
        <position position="305"/>
    </location>
    <ligand>
        <name>Mg(2+)</name>
        <dbReference type="ChEBI" id="CHEBI:18420"/>
        <label>1</label>
    </ligand>
</feature>
<feature type="binding site" evidence="1">
    <location>
        <position position="305"/>
    </location>
    <ligand>
        <name>Mg(2+)</name>
        <dbReference type="ChEBI" id="CHEBI:18420"/>
        <label>2</label>
    </ligand>
</feature>
<feature type="binding site" evidence="1">
    <location>
        <position position="309"/>
    </location>
    <ligand>
        <name>Mg(2+)</name>
        <dbReference type="ChEBI" id="CHEBI:18420"/>
        <label>1</label>
    </ligand>
</feature>
<feature type="binding site" evidence="1">
    <location>
        <position position="309"/>
    </location>
    <ligand>
        <name>Mg(2+)</name>
        <dbReference type="ChEBI" id="CHEBI:18420"/>
        <label>2</label>
    </ligand>
</feature>
<feature type="binding site" evidence="1">
    <location>
        <position position="457"/>
    </location>
    <ligand>
        <name>Mg(2+)</name>
        <dbReference type="ChEBI" id="CHEBI:18420"/>
        <label>3</label>
    </ligand>
</feature>
<evidence type="ECO:0000250" key="1"/>
<evidence type="ECO:0000305" key="2"/>
<evidence type="ECO:0000305" key="3">
    <source>
    </source>
</evidence>
<protein>
    <recommendedName>
        <fullName>Probable terpene synthase 2</fullName>
        <shortName>RcSeTPS2</shortName>
        <ecNumber>4.2.3.-</ecNumber>
    </recommendedName>
</protein>
<proteinExistence type="inferred from homology"/>
<accession>B9SCB6</accession>
<gene>
    <name type="primary">TPS2</name>
    <name type="ORF">RCOM_0890850</name>
</gene>
<sequence length="550" mass="63680">MSAQTLAISNLKPNTTRHLASFHPNIWGDRFLSCAAESTDIEDDMEQQVERLKEEVKKMIASADEPSQILNLIDLLQRLGVSYHFEKEIEEALQQVLNMNSDSDKDDDLHSVALRFRLLREQGLNVSCDVFNKFRDRNGHFIQTLKTDLQGMLSLYEAAHFRVHGEGILDDALAFTTTYLESIVPNLSPPLAAQISRTLRQPLRKSLARVEARHFISIYQEDTSHNEVLLTFAKLDFNLLQKLHQKELKYISLWWKDLDFVNKLPFTRDRVVEGYFWILGVYFEPQYHRARKFVTKVINVVSVIDDIYDAYGTLEELVVFTDAINRWDIDCIDQLPEYMKVCYKALLNVYEEIERALSEQGRSYRLHYAKEAMKKLVQAYLVEANWMNKNYVPTMDEYMSIALVSCAYPLLTVTSFVGMGDIATKEVFDWASNDPKIVRVASIICRLMDDIVSHEFEQKRGHIASSVECYMKQNGVSEEATRDEFNKQIVDAWKDINEEHLQPNYVPMPFRTRVVNSARIMDYLYKDDDEYTHVGELMKGSVAALLIDPA</sequence>
<dbReference type="EC" id="4.2.3.-"/>
<dbReference type="EMBL" id="EQ973920">
    <property type="protein sequence ID" value="EEF38721.1"/>
    <property type="molecule type" value="Genomic_DNA"/>
</dbReference>
<dbReference type="RefSeq" id="XP_002523635.1">
    <property type="nucleotide sequence ID" value="XM_002523589.1"/>
</dbReference>
<dbReference type="SMR" id="B9SCB6"/>
<dbReference type="STRING" id="3988.B9SCB6"/>
<dbReference type="GeneID" id="8289511"/>
<dbReference type="KEGG" id="rcu:8289511"/>
<dbReference type="eggNOG" id="ENOG502QUCN">
    <property type="taxonomic scope" value="Eukaryota"/>
</dbReference>
<dbReference type="InParanoid" id="B9SCB6"/>
<dbReference type="OrthoDB" id="1877784at2759"/>
<dbReference type="Proteomes" id="UP000008311">
    <property type="component" value="Unassembled WGS sequence"/>
</dbReference>
<dbReference type="GO" id="GO:0000287">
    <property type="term" value="F:magnesium ion binding"/>
    <property type="evidence" value="ECO:0007669"/>
    <property type="project" value="InterPro"/>
</dbReference>
<dbReference type="GO" id="GO:0010333">
    <property type="term" value="F:terpene synthase activity"/>
    <property type="evidence" value="ECO:0007669"/>
    <property type="project" value="InterPro"/>
</dbReference>
<dbReference type="GO" id="GO:0016102">
    <property type="term" value="P:diterpenoid biosynthetic process"/>
    <property type="evidence" value="ECO:0007669"/>
    <property type="project" value="InterPro"/>
</dbReference>
<dbReference type="GO" id="GO:0120251">
    <property type="term" value="P:hydrocarbon biosynthetic process"/>
    <property type="evidence" value="ECO:0007669"/>
    <property type="project" value="UniProtKB-ARBA"/>
</dbReference>
<dbReference type="CDD" id="cd00684">
    <property type="entry name" value="Terpene_cyclase_plant_C1"/>
    <property type="match status" value="1"/>
</dbReference>
<dbReference type="FunFam" id="1.10.600.10:FF:000007">
    <property type="entry name" value="Isoprene synthase, chloroplastic"/>
    <property type="match status" value="1"/>
</dbReference>
<dbReference type="FunFam" id="1.50.10.130:FF:000001">
    <property type="entry name" value="Isoprene synthase, chloroplastic"/>
    <property type="match status" value="1"/>
</dbReference>
<dbReference type="Gene3D" id="1.10.600.10">
    <property type="entry name" value="Farnesyl Diphosphate Synthase"/>
    <property type="match status" value="1"/>
</dbReference>
<dbReference type="Gene3D" id="1.50.10.130">
    <property type="entry name" value="Terpene synthase, N-terminal domain"/>
    <property type="match status" value="1"/>
</dbReference>
<dbReference type="InterPro" id="IPR008949">
    <property type="entry name" value="Isoprenoid_synthase_dom_sf"/>
</dbReference>
<dbReference type="InterPro" id="IPR034741">
    <property type="entry name" value="Terpene_cyclase-like_1_C"/>
</dbReference>
<dbReference type="InterPro" id="IPR044814">
    <property type="entry name" value="Terpene_cyclase_plant_C1"/>
</dbReference>
<dbReference type="InterPro" id="IPR001906">
    <property type="entry name" value="Terpene_synth_N"/>
</dbReference>
<dbReference type="InterPro" id="IPR036965">
    <property type="entry name" value="Terpene_synth_N_sf"/>
</dbReference>
<dbReference type="InterPro" id="IPR050148">
    <property type="entry name" value="Terpene_synthase-like"/>
</dbReference>
<dbReference type="InterPro" id="IPR005630">
    <property type="entry name" value="Terpene_synthase_metal-bd"/>
</dbReference>
<dbReference type="InterPro" id="IPR008930">
    <property type="entry name" value="Terpenoid_cyclase/PrenylTrfase"/>
</dbReference>
<dbReference type="PANTHER" id="PTHR31225">
    <property type="entry name" value="OS04G0344100 PROTEIN-RELATED"/>
    <property type="match status" value="1"/>
</dbReference>
<dbReference type="PANTHER" id="PTHR31225:SF236">
    <property type="entry name" value="TERPENE SYNTHASE 2-RELATED"/>
    <property type="match status" value="1"/>
</dbReference>
<dbReference type="Pfam" id="PF01397">
    <property type="entry name" value="Terpene_synth"/>
    <property type="match status" value="1"/>
</dbReference>
<dbReference type="Pfam" id="PF03936">
    <property type="entry name" value="Terpene_synth_C"/>
    <property type="match status" value="1"/>
</dbReference>
<dbReference type="SFLD" id="SFLDG01019">
    <property type="entry name" value="Terpene_Cyclase_Like_1_C_Termi"/>
    <property type="match status" value="1"/>
</dbReference>
<dbReference type="SFLD" id="SFLDG01604">
    <property type="entry name" value="Terpene_Cyclase_Like_1_C_Termi"/>
    <property type="match status" value="1"/>
</dbReference>
<dbReference type="SUPFAM" id="SSF48239">
    <property type="entry name" value="Terpenoid cyclases/Protein prenyltransferases"/>
    <property type="match status" value="1"/>
</dbReference>
<dbReference type="SUPFAM" id="SSF48576">
    <property type="entry name" value="Terpenoid synthases"/>
    <property type="match status" value="1"/>
</dbReference>